<organismHost>
    <name type="scientific">Vertebrata</name>
    <dbReference type="NCBI Taxonomy" id="7742"/>
</organismHost>
<proteinExistence type="inferred from homology"/>
<reference key="1">
    <citation type="journal article" date="1990" name="J. Gen. Virol.">
        <title>Nucleotide sequence analysis of a 10.5 kbp HindIII fragment of fowlpox virus: relatedness to the central portion of the vaccinia virus HindIII D region.</title>
        <authorList>
            <person name="Tartaglia J."/>
            <person name="Winslow J."/>
            <person name="Goebel S.J."/>
            <person name="Johnson G.P."/>
            <person name="Taylor J."/>
            <person name="Paoletti E."/>
        </authorList>
    </citation>
    <scope>NUCLEOTIDE SEQUENCE [GENOMIC DNA]</scope>
    <source>
        <strain>FP-1</strain>
    </source>
</reference>
<reference key="2">
    <citation type="journal article" date="2000" name="J. Virol.">
        <title>The genome of fowlpox virus.</title>
        <authorList>
            <person name="Afonso C.L."/>
            <person name="Tulman E.R."/>
            <person name="Lu Z."/>
            <person name="Zsak L."/>
            <person name="Kutish G.F."/>
            <person name="Rock D.L."/>
        </authorList>
    </citation>
    <scope>NUCLEOTIDE SEQUENCE [LARGE SCALE GENOMIC DNA]</scope>
</reference>
<keyword id="KW-0010">Activator</keyword>
<keyword id="KW-0067">ATP-binding</keyword>
<keyword id="KW-0238">DNA-binding</keyword>
<keyword id="KW-0347">Helicase</keyword>
<keyword id="KW-0378">Hydrolase</keyword>
<keyword id="KW-0547">Nucleotide-binding</keyword>
<keyword id="KW-1185">Reference proteome</keyword>
<keyword id="KW-0804">Transcription</keyword>
<keyword id="KW-0805">Transcription regulation</keyword>
<keyword id="KW-0946">Virion</keyword>
<evidence type="ECO:0000250" key="1"/>
<evidence type="ECO:0000255" key="2">
    <source>
        <dbReference type="PROSITE-ProRule" id="PRU00541"/>
    </source>
</evidence>
<evidence type="ECO:0000255" key="3">
    <source>
        <dbReference type="PROSITE-ProRule" id="PRU00542"/>
    </source>
</evidence>
<evidence type="ECO:0000305" key="4"/>
<accession>P21966</accession>
<accession>Q9J5F2</accession>
<gene>
    <name type="primary">VETFS</name>
    <name type="ordered locus">FPV057</name>
    <name type="ORF">FPD6</name>
</gene>
<protein>
    <recommendedName>
        <fullName>Early transcription factor 70 kDa subunit</fullName>
        <ecNumber>3.6.4.-</ecNumber>
    </recommendedName>
    <alternativeName>
        <fullName>ATP-dependent helicase VETFS</fullName>
    </alternativeName>
    <alternativeName>
        <fullName>ETF small subunit</fullName>
    </alternativeName>
</protein>
<comment type="function">
    <text evidence="1">Acts with RNA polymerase to initiate transcription from early gene promoters. Is recruited by the RPO-associated protein of 94 kDa (RAP94) to form the early transcription complex, which also contains the core RNA polymerase. ETF heterodimer binds to early gene promoters (By similarity).</text>
</comment>
<comment type="subunit">
    <text evidence="1">Heterodimer of a 70 kDa and a 82 kDa subunit. Part of the early transcription complex composed of ETF, RAP94, and the DNA-directed RNA polymerase (By similarity).</text>
</comment>
<comment type="subcellular location">
    <subcellularLocation>
        <location evidence="4">Virion</location>
    </subcellularLocation>
    <text>All the enzymes and other proteins required to synthesize early mRNAs are packaged within the virion core along with the DNA genome. This is necessary because viral early mRNAs are synthesized within minutes after virus entry into the cell and are extruded through pores in the core particle.</text>
</comment>
<comment type="similarity">
    <text evidence="4">Belongs to the helicase family. VETF subfamily.</text>
</comment>
<dbReference type="EC" id="3.6.4.-"/>
<dbReference type="EMBL" id="X17202">
    <property type="protein sequence ID" value="CAA35069.1"/>
    <property type="molecule type" value="Genomic_DNA"/>
</dbReference>
<dbReference type="EMBL" id="AF198100">
    <property type="protein sequence ID" value="AAF44401.1"/>
    <property type="molecule type" value="Genomic_DNA"/>
</dbReference>
<dbReference type="PIR" id="F35216">
    <property type="entry name" value="F35216"/>
</dbReference>
<dbReference type="RefSeq" id="NP_039020.1">
    <property type="nucleotide sequence ID" value="NC_002188.1"/>
</dbReference>
<dbReference type="SMR" id="P21966"/>
<dbReference type="GeneID" id="1486605"/>
<dbReference type="KEGG" id="vg:1486605"/>
<dbReference type="Proteomes" id="UP000008597">
    <property type="component" value="Segment"/>
</dbReference>
<dbReference type="GO" id="GO:0044423">
    <property type="term" value="C:virion component"/>
    <property type="evidence" value="ECO:0007669"/>
    <property type="project" value="UniProtKB-KW"/>
</dbReference>
<dbReference type="GO" id="GO:0005524">
    <property type="term" value="F:ATP binding"/>
    <property type="evidence" value="ECO:0007669"/>
    <property type="project" value="UniProtKB-KW"/>
</dbReference>
<dbReference type="GO" id="GO:0003677">
    <property type="term" value="F:DNA binding"/>
    <property type="evidence" value="ECO:0007669"/>
    <property type="project" value="UniProtKB-KW"/>
</dbReference>
<dbReference type="GO" id="GO:0004386">
    <property type="term" value="F:helicase activity"/>
    <property type="evidence" value="ECO:0007669"/>
    <property type="project" value="UniProtKB-KW"/>
</dbReference>
<dbReference type="GO" id="GO:0016787">
    <property type="term" value="F:hydrolase activity"/>
    <property type="evidence" value="ECO:0007669"/>
    <property type="project" value="UniProtKB-KW"/>
</dbReference>
<dbReference type="Gene3D" id="3.40.50.300">
    <property type="entry name" value="P-loop containing nucleotide triphosphate hydrolases"/>
    <property type="match status" value="2"/>
</dbReference>
<dbReference type="InterPro" id="IPR002464">
    <property type="entry name" value="DNA/RNA_helicase_DEAH_CS"/>
</dbReference>
<dbReference type="InterPro" id="IPR006935">
    <property type="entry name" value="Helicase/UvrB_N"/>
</dbReference>
<dbReference type="InterPro" id="IPR014001">
    <property type="entry name" value="Helicase_ATP-bd"/>
</dbReference>
<dbReference type="InterPro" id="IPR001650">
    <property type="entry name" value="Helicase_C-like"/>
</dbReference>
<dbReference type="InterPro" id="IPR027417">
    <property type="entry name" value="P-loop_NTPase"/>
</dbReference>
<dbReference type="Pfam" id="PF00271">
    <property type="entry name" value="Helicase_C"/>
    <property type="match status" value="1"/>
</dbReference>
<dbReference type="Pfam" id="PF04851">
    <property type="entry name" value="ResIII"/>
    <property type="match status" value="1"/>
</dbReference>
<dbReference type="SMART" id="SM00487">
    <property type="entry name" value="DEXDc"/>
    <property type="match status" value="1"/>
</dbReference>
<dbReference type="SMART" id="SM00490">
    <property type="entry name" value="HELICc"/>
    <property type="match status" value="1"/>
</dbReference>
<dbReference type="SUPFAM" id="SSF52540">
    <property type="entry name" value="P-loop containing nucleoside triphosphate hydrolases"/>
    <property type="match status" value="2"/>
</dbReference>
<dbReference type="PROSITE" id="PS00690">
    <property type="entry name" value="DEAH_ATP_HELICASE"/>
    <property type="match status" value="1"/>
</dbReference>
<dbReference type="PROSITE" id="PS51192">
    <property type="entry name" value="HELICASE_ATP_BIND_1"/>
    <property type="match status" value="1"/>
</dbReference>
<dbReference type="PROSITE" id="PS51194">
    <property type="entry name" value="HELICASE_CTER"/>
    <property type="match status" value="1"/>
</dbReference>
<feature type="chain" id="PRO_0000099073" description="Early transcription factor 70 kDa subunit">
    <location>
        <begin position="1"/>
        <end position="633"/>
    </location>
</feature>
<feature type="domain" description="Helicase ATP-binding" evidence="2">
    <location>
        <begin position="32"/>
        <end position="185"/>
    </location>
</feature>
<feature type="domain" description="Helicase C-terminal" evidence="3">
    <location>
        <begin position="326"/>
        <end position="505"/>
    </location>
</feature>
<feature type="short sequence motif" description="DEXH box">
    <location>
        <begin position="135"/>
        <end position="138"/>
    </location>
</feature>
<feature type="binding site" evidence="2">
    <location>
        <begin position="45"/>
        <end position="52"/>
    </location>
    <ligand>
        <name>ATP</name>
        <dbReference type="ChEBI" id="CHEBI:30616"/>
    </ligand>
</feature>
<feature type="sequence conflict" description="In Ref. 1; CAA35069." evidence="4" ref="1">
    <original>NDIIVVPFNLLFTEYSWMINFRKELNVVV</original>
    <variation>K</variation>
    <location>
        <begin position="605"/>
        <end position="633"/>
    </location>
</feature>
<organism>
    <name type="scientific">Fowlpox virus (strain NVSL)</name>
    <name type="common">FPV</name>
    <dbReference type="NCBI Taxonomy" id="928301"/>
    <lineage>
        <taxon>Viruses</taxon>
        <taxon>Varidnaviria</taxon>
        <taxon>Bamfordvirae</taxon>
        <taxon>Nucleocytoviricota</taxon>
        <taxon>Pokkesviricetes</taxon>
        <taxon>Chitovirales</taxon>
        <taxon>Poxviridae</taxon>
        <taxon>Chordopoxvirinae</taxon>
        <taxon>Avipoxvirus</taxon>
        <taxon>Fowlpox virus</taxon>
    </lineage>
</organism>
<name>ETF1_FOWPN</name>
<sequence length="633" mass="73020">MNLEILELFNGHIDNIPNILPHQLATLDYLLRTILDHNESVLLFHIMGSGKTIIALLFALIVSKFKKVYILVPNINILNIFTYNLDLATNLINTEYVIENIHIYSTINFYSLNYNDNVVNYNALSKYNDSIFIIDEAHNIFGNNTGELMTIIKNKNKVPFLLLSGSPITNTPITLSNIISIMSDEGINFNDIIIQGKKVFQIILNEKGVSVLKNILKNKISYYELCDTELPSIIFHGKEFLDTKVVYCKMSKLQETDYINVRKLCNNEMFEKNMTNVSLAVLGPLNLANSLELLFVEQDKELYPNLKINDGVLYGDELTKLNISSKFKYFIDTIGNLTGKNFIYFSNSTYGGLVIKYIMLNNGYSEYAGSQGTNPKMINGHLKTFAIVTSKMKSSLEDLLEVYNSPGNDNGEKIMFLFSSNIMSESYTLKEVRNIWFMTIPDTFSQYNQILGRSIRKFSYKDVSKPVNVYLLATVYSDFNDTITSLDDYSIDDINTLPFDIKKLLYLKFKTKETKRIYSILKDLSINYRSSPHPYITDVVLGELVRQFFYHNSRVSINDAKLFKMVNSIFKSKEKTQKYIEKITDDHFFVTNKVFEKSLLYKHKNDIIVVPFNLLFTEYSWMINFRKELNVVV</sequence>